<feature type="chain" id="PRO_1000078012" description="Anthranilate phosphoribosyltransferase">
    <location>
        <begin position="1"/>
        <end position="336"/>
    </location>
</feature>
<feature type="binding site" evidence="1">
    <location>
        <position position="79"/>
    </location>
    <ligand>
        <name>5-phospho-alpha-D-ribose 1-diphosphate</name>
        <dbReference type="ChEBI" id="CHEBI:58017"/>
    </ligand>
</feature>
<feature type="binding site" evidence="1">
    <location>
        <position position="79"/>
    </location>
    <ligand>
        <name>anthranilate</name>
        <dbReference type="ChEBI" id="CHEBI:16567"/>
        <label>1</label>
    </ligand>
</feature>
<feature type="binding site" evidence="1">
    <location>
        <begin position="82"/>
        <end position="83"/>
    </location>
    <ligand>
        <name>5-phospho-alpha-D-ribose 1-diphosphate</name>
        <dbReference type="ChEBI" id="CHEBI:58017"/>
    </ligand>
</feature>
<feature type="binding site" evidence="1">
    <location>
        <position position="87"/>
    </location>
    <ligand>
        <name>5-phospho-alpha-D-ribose 1-diphosphate</name>
        <dbReference type="ChEBI" id="CHEBI:58017"/>
    </ligand>
</feature>
<feature type="binding site" evidence="1">
    <location>
        <begin position="89"/>
        <end position="92"/>
    </location>
    <ligand>
        <name>5-phospho-alpha-D-ribose 1-diphosphate</name>
        <dbReference type="ChEBI" id="CHEBI:58017"/>
    </ligand>
</feature>
<feature type="binding site" evidence="1">
    <location>
        <position position="91"/>
    </location>
    <ligand>
        <name>Mg(2+)</name>
        <dbReference type="ChEBI" id="CHEBI:18420"/>
        <label>1</label>
    </ligand>
</feature>
<feature type="binding site" evidence="1">
    <location>
        <begin position="107"/>
        <end position="115"/>
    </location>
    <ligand>
        <name>5-phospho-alpha-D-ribose 1-diphosphate</name>
        <dbReference type="ChEBI" id="CHEBI:58017"/>
    </ligand>
</feature>
<feature type="binding site" evidence="1">
    <location>
        <position position="110"/>
    </location>
    <ligand>
        <name>anthranilate</name>
        <dbReference type="ChEBI" id="CHEBI:16567"/>
        <label>1</label>
    </ligand>
</feature>
<feature type="binding site" evidence="1">
    <location>
        <position position="119"/>
    </location>
    <ligand>
        <name>5-phospho-alpha-D-ribose 1-diphosphate</name>
        <dbReference type="ChEBI" id="CHEBI:58017"/>
    </ligand>
</feature>
<feature type="binding site" evidence="1">
    <location>
        <position position="165"/>
    </location>
    <ligand>
        <name>anthranilate</name>
        <dbReference type="ChEBI" id="CHEBI:16567"/>
        <label>2</label>
    </ligand>
</feature>
<feature type="binding site" evidence="1">
    <location>
        <position position="224"/>
    </location>
    <ligand>
        <name>Mg(2+)</name>
        <dbReference type="ChEBI" id="CHEBI:18420"/>
        <label>2</label>
    </ligand>
</feature>
<feature type="binding site" evidence="1">
    <location>
        <position position="225"/>
    </location>
    <ligand>
        <name>Mg(2+)</name>
        <dbReference type="ChEBI" id="CHEBI:18420"/>
        <label>1</label>
    </ligand>
</feature>
<feature type="binding site" evidence="1">
    <location>
        <position position="225"/>
    </location>
    <ligand>
        <name>Mg(2+)</name>
        <dbReference type="ChEBI" id="CHEBI:18420"/>
        <label>2</label>
    </ligand>
</feature>
<name>TRPD_LACP7</name>
<dbReference type="EC" id="2.4.2.18" evidence="1"/>
<dbReference type="EMBL" id="CP000885">
    <property type="protein sequence ID" value="ABX44193.1"/>
    <property type="molecule type" value="Genomic_DNA"/>
</dbReference>
<dbReference type="RefSeq" id="WP_012201841.1">
    <property type="nucleotide sequence ID" value="NC_010001.1"/>
</dbReference>
<dbReference type="SMR" id="A9KL44"/>
<dbReference type="STRING" id="357809.Cphy_3846"/>
<dbReference type="KEGG" id="cpy:Cphy_3846"/>
<dbReference type="eggNOG" id="COG0547">
    <property type="taxonomic scope" value="Bacteria"/>
</dbReference>
<dbReference type="HOGENOM" id="CLU_034315_2_1_9"/>
<dbReference type="OrthoDB" id="9806430at2"/>
<dbReference type="UniPathway" id="UPA00035">
    <property type="reaction ID" value="UER00041"/>
</dbReference>
<dbReference type="Proteomes" id="UP000000370">
    <property type="component" value="Chromosome"/>
</dbReference>
<dbReference type="GO" id="GO:0005829">
    <property type="term" value="C:cytosol"/>
    <property type="evidence" value="ECO:0007669"/>
    <property type="project" value="TreeGrafter"/>
</dbReference>
<dbReference type="GO" id="GO:0004048">
    <property type="term" value="F:anthranilate phosphoribosyltransferase activity"/>
    <property type="evidence" value="ECO:0007669"/>
    <property type="project" value="UniProtKB-UniRule"/>
</dbReference>
<dbReference type="GO" id="GO:0000287">
    <property type="term" value="F:magnesium ion binding"/>
    <property type="evidence" value="ECO:0007669"/>
    <property type="project" value="UniProtKB-UniRule"/>
</dbReference>
<dbReference type="GO" id="GO:0000162">
    <property type="term" value="P:L-tryptophan biosynthetic process"/>
    <property type="evidence" value="ECO:0007669"/>
    <property type="project" value="UniProtKB-UniRule"/>
</dbReference>
<dbReference type="FunFam" id="3.40.1030.10:FF:000002">
    <property type="entry name" value="Anthranilate phosphoribosyltransferase"/>
    <property type="match status" value="1"/>
</dbReference>
<dbReference type="Gene3D" id="3.40.1030.10">
    <property type="entry name" value="Nucleoside phosphorylase/phosphoribosyltransferase catalytic domain"/>
    <property type="match status" value="1"/>
</dbReference>
<dbReference type="Gene3D" id="1.20.970.10">
    <property type="entry name" value="Transferase, Pyrimidine Nucleoside Phosphorylase, Chain C"/>
    <property type="match status" value="1"/>
</dbReference>
<dbReference type="HAMAP" id="MF_00211">
    <property type="entry name" value="TrpD"/>
    <property type="match status" value="1"/>
</dbReference>
<dbReference type="InterPro" id="IPR005940">
    <property type="entry name" value="Anthranilate_Pribosyl_Tfrase"/>
</dbReference>
<dbReference type="InterPro" id="IPR000312">
    <property type="entry name" value="Glycosyl_Trfase_fam3"/>
</dbReference>
<dbReference type="InterPro" id="IPR017459">
    <property type="entry name" value="Glycosyl_Trfase_fam3_N_dom"/>
</dbReference>
<dbReference type="InterPro" id="IPR036320">
    <property type="entry name" value="Glycosyl_Trfase_fam3_N_dom_sf"/>
</dbReference>
<dbReference type="InterPro" id="IPR035902">
    <property type="entry name" value="Nuc_phospho_transferase"/>
</dbReference>
<dbReference type="NCBIfam" id="TIGR01245">
    <property type="entry name" value="trpD"/>
    <property type="match status" value="1"/>
</dbReference>
<dbReference type="PANTHER" id="PTHR43285">
    <property type="entry name" value="ANTHRANILATE PHOSPHORIBOSYLTRANSFERASE"/>
    <property type="match status" value="1"/>
</dbReference>
<dbReference type="PANTHER" id="PTHR43285:SF2">
    <property type="entry name" value="ANTHRANILATE PHOSPHORIBOSYLTRANSFERASE"/>
    <property type="match status" value="1"/>
</dbReference>
<dbReference type="Pfam" id="PF02885">
    <property type="entry name" value="Glycos_trans_3N"/>
    <property type="match status" value="1"/>
</dbReference>
<dbReference type="Pfam" id="PF00591">
    <property type="entry name" value="Glycos_transf_3"/>
    <property type="match status" value="1"/>
</dbReference>
<dbReference type="SUPFAM" id="SSF52418">
    <property type="entry name" value="Nucleoside phosphorylase/phosphoribosyltransferase catalytic domain"/>
    <property type="match status" value="1"/>
</dbReference>
<dbReference type="SUPFAM" id="SSF47648">
    <property type="entry name" value="Nucleoside phosphorylase/phosphoribosyltransferase N-terminal domain"/>
    <property type="match status" value="1"/>
</dbReference>
<accession>A9KL44</accession>
<comment type="function">
    <text evidence="1">Catalyzes the transfer of the phosphoribosyl group of 5-phosphorylribose-1-pyrophosphate (PRPP) to anthranilate to yield N-(5'-phosphoribosyl)-anthranilate (PRA).</text>
</comment>
<comment type="catalytic activity">
    <reaction evidence="1">
        <text>N-(5-phospho-beta-D-ribosyl)anthranilate + diphosphate = 5-phospho-alpha-D-ribose 1-diphosphate + anthranilate</text>
        <dbReference type="Rhea" id="RHEA:11768"/>
        <dbReference type="ChEBI" id="CHEBI:16567"/>
        <dbReference type="ChEBI" id="CHEBI:18277"/>
        <dbReference type="ChEBI" id="CHEBI:33019"/>
        <dbReference type="ChEBI" id="CHEBI:58017"/>
        <dbReference type="EC" id="2.4.2.18"/>
    </reaction>
</comment>
<comment type="cofactor">
    <cofactor evidence="1">
        <name>Mg(2+)</name>
        <dbReference type="ChEBI" id="CHEBI:18420"/>
    </cofactor>
    <text evidence="1">Binds 2 magnesium ions per monomer.</text>
</comment>
<comment type="pathway">
    <text evidence="1">Amino-acid biosynthesis; L-tryptophan biosynthesis; L-tryptophan from chorismate: step 2/5.</text>
</comment>
<comment type="subunit">
    <text evidence="1">Homodimer.</text>
</comment>
<comment type="similarity">
    <text evidence="1">Belongs to the anthranilate phosphoribosyltransferase family.</text>
</comment>
<gene>
    <name evidence="1" type="primary">trpD</name>
    <name type="ordered locus">Cphy_3846</name>
</gene>
<proteinExistence type="inferred from homology"/>
<organism>
    <name type="scientific">Lachnoclostridium phytofermentans (strain ATCC 700394 / DSM 18823 / ISDg)</name>
    <name type="common">Clostridium phytofermentans</name>
    <dbReference type="NCBI Taxonomy" id="357809"/>
    <lineage>
        <taxon>Bacteria</taxon>
        <taxon>Bacillati</taxon>
        <taxon>Bacillota</taxon>
        <taxon>Clostridia</taxon>
        <taxon>Lachnospirales</taxon>
        <taxon>Lachnospiraceae</taxon>
    </lineage>
</organism>
<keyword id="KW-0028">Amino-acid biosynthesis</keyword>
<keyword id="KW-0057">Aromatic amino acid biosynthesis</keyword>
<keyword id="KW-0328">Glycosyltransferase</keyword>
<keyword id="KW-0460">Magnesium</keyword>
<keyword id="KW-0479">Metal-binding</keyword>
<keyword id="KW-1185">Reference proteome</keyword>
<keyword id="KW-0808">Transferase</keyword>
<keyword id="KW-0822">Tryptophan biosynthesis</keyword>
<protein>
    <recommendedName>
        <fullName evidence="1">Anthranilate phosphoribosyltransferase</fullName>
        <ecNumber evidence="1">2.4.2.18</ecNumber>
    </recommendedName>
</protein>
<evidence type="ECO:0000255" key="1">
    <source>
        <dbReference type="HAMAP-Rule" id="MF_00211"/>
    </source>
</evidence>
<sequence>MIKEAIYQLVNKEDLSYEVAEQVMDEIMSGEASNVLIGSYLTALRMKGETIDEITASAAGMRKHCVRLLHNMDVLEIVGTGGDEANTFNISTTTGFVVSAAGIPVAKHGNRCVSSKCGAADVLEALGVNIMLAPLESAKILEEMGLCFMFAQTYHSAMKFVAPVRRELGIRTIFNILGPLANPAGANLELLGVYEEALVKPLARVLLKLGVKRGMVVYGRDGLDEISLSHQTVCCKIRDGKLYDYILEPEQIGLTKCKKEDLVGGSPAENAAITRAILNGEKGPKRDAVIFNAAACIYMVRDDITLQEAAKIATDIIDSKKAIHQLDKFIELSNRR</sequence>
<reference key="1">
    <citation type="submission" date="2007-11" db="EMBL/GenBank/DDBJ databases">
        <title>Complete genome sequence of Clostridium phytofermentans ISDg.</title>
        <authorList>
            <person name="Leschine S.B."/>
            <person name="Warnick T.A."/>
            <person name="Blanchard J.L."/>
            <person name="Schnell D.J."/>
            <person name="Petit E.L."/>
            <person name="LaTouf W.G."/>
            <person name="Copeland A."/>
            <person name="Lucas S."/>
            <person name="Lapidus A."/>
            <person name="Barry K."/>
            <person name="Glavina del Rio T."/>
            <person name="Dalin E."/>
            <person name="Tice H."/>
            <person name="Pitluck S."/>
            <person name="Kiss H."/>
            <person name="Brettin T."/>
            <person name="Bruce D."/>
            <person name="Detter J.C."/>
            <person name="Han C."/>
            <person name="Kuske C."/>
            <person name="Schmutz J."/>
            <person name="Larimer F."/>
            <person name="Land M."/>
            <person name="Hauser L."/>
            <person name="Kyrpides N."/>
            <person name="Kim E.A."/>
            <person name="Richardson P."/>
        </authorList>
    </citation>
    <scope>NUCLEOTIDE SEQUENCE [LARGE SCALE GENOMIC DNA]</scope>
    <source>
        <strain>ATCC 700394 / DSM 18823 / ISDg</strain>
    </source>
</reference>